<name>HCP_PORGI</name>
<sequence length="550" mass="60529">MEKKMFCYQCQETAGNKGCILKGVCGKDFSTANLMDLLVFNLKGIAIIMTSMRRAGVKADYRKADKAIMESLFATITNANFDYSSIAKRVEKTFALKAELYSLAFTQGIELPENEAVTMQGKPEEYDRLALSVGILRETDEDVRSLKELTIYGLKGLAAYAEHADRLGYVDEEINAFTERALHDVTMGLLSAEELTALVLETGSFGVKVMALLDKANTETYGNPEITEVNIGVGSRPGILISGHDLKDMEMLLEQTEGTGIDVYTHGEMLPANYYPKFKKYNHFFGNYGNAWWKQREEFETFNGPILFTTNCIVPPKANASYKDRVFTTNATGYPGFKYIESDQHGRKDFSEIIALAKTCQPPTEIESGTIIGGFAHHQVLSIADKVVEAVSSGAIRKFVVMSGCDGRQSGRNYYTEFAEALPSDTVILTSGCAKFRYNKLQLGDIGGIPRVLDAGQCNDSYSLAVIALKLKEVMGLDDINKLPIVYNIAWYEQKAVIVLLALLSLGVKNIHVGPTLPAFLSPNVAKVLIENFGIAGIGTVEEDIRTLIA</sequence>
<organism>
    <name type="scientific">Porphyromonas gingivalis (strain ATCC BAA-308 / W83)</name>
    <dbReference type="NCBI Taxonomy" id="242619"/>
    <lineage>
        <taxon>Bacteria</taxon>
        <taxon>Pseudomonadati</taxon>
        <taxon>Bacteroidota</taxon>
        <taxon>Bacteroidia</taxon>
        <taxon>Bacteroidales</taxon>
        <taxon>Porphyromonadaceae</taxon>
        <taxon>Porphyromonas</taxon>
    </lineage>
</organism>
<reference key="1">
    <citation type="journal article" date="2003" name="J. Bacteriol.">
        <title>Complete genome sequence of the oral pathogenic bacterium Porphyromonas gingivalis strain W83.</title>
        <authorList>
            <person name="Nelson K.E."/>
            <person name="Fleischmann R.D."/>
            <person name="DeBoy R.T."/>
            <person name="Paulsen I.T."/>
            <person name="Fouts D.E."/>
            <person name="Eisen J.A."/>
            <person name="Daugherty S.C."/>
            <person name="Dodson R.J."/>
            <person name="Durkin A.S."/>
            <person name="Gwinn M.L."/>
            <person name="Haft D.H."/>
            <person name="Kolonay J.F."/>
            <person name="Nelson W.C."/>
            <person name="Mason T.M."/>
            <person name="Tallon L."/>
            <person name="Gray J."/>
            <person name="Granger D."/>
            <person name="Tettelin H."/>
            <person name="Dong H."/>
            <person name="Galvin J.L."/>
            <person name="Duncan M.J."/>
            <person name="Dewhirst F.E."/>
            <person name="Fraser C.M."/>
        </authorList>
    </citation>
    <scope>NUCLEOTIDE SEQUENCE [LARGE SCALE GENOMIC DNA]</scope>
    <source>
        <strain>ATCC BAA-308 / W83</strain>
    </source>
</reference>
<feature type="chain" id="PRO_0000151679" description="Hydroxylamine reductase">
    <location>
        <begin position="1"/>
        <end position="550"/>
    </location>
</feature>
<feature type="binding site" evidence="1">
    <location>
        <position position="7"/>
    </location>
    <ligand>
        <name>[4Fe-4S] cluster</name>
        <dbReference type="ChEBI" id="CHEBI:49883"/>
    </ligand>
</feature>
<feature type="binding site" evidence="1">
    <location>
        <position position="10"/>
    </location>
    <ligand>
        <name>[4Fe-4S] cluster</name>
        <dbReference type="ChEBI" id="CHEBI:49883"/>
    </ligand>
</feature>
<feature type="binding site" evidence="1">
    <location>
        <position position="19"/>
    </location>
    <ligand>
        <name>[4Fe-4S] cluster</name>
        <dbReference type="ChEBI" id="CHEBI:49883"/>
    </ligand>
</feature>
<feature type="binding site" evidence="1">
    <location>
        <position position="25"/>
    </location>
    <ligand>
        <name>[4Fe-4S] cluster</name>
        <dbReference type="ChEBI" id="CHEBI:49883"/>
    </ligand>
</feature>
<feature type="binding site" evidence="1">
    <location>
        <position position="244"/>
    </location>
    <ligand>
        <name>hybrid [4Fe-2O-2S] cluster</name>
        <dbReference type="ChEBI" id="CHEBI:60519"/>
    </ligand>
</feature>
<feature type="binding site" evidence="1">
    <location>
        <position position="268"/>
    </location>
    <ligand>
        <name>hybrid [4Fe-2O-2S] cluster</name>
        <dbReference type="ChEBI" id="CHEBI:60519"/>
    </ligand>
</feature>
<feature type="binding site" evidence="1">
    <location>
        <position position="312"/>
    </location>
    <ligand>
        <name>hybrid [4Fe-2O-2S] cluster</name>
        <dbReference type="ChEBI" id="CHEBI:60519"/>
    </ligand>
</feature>
<feature type="binding site" description="via persulfide group" evidence="1">
    <location>
        <position position="405"/>
    </location>
    <ligand>
        <name>hybrid [4Fe-2O-2S] cluster</name>
        <dbReference type="ChEBI" id="CHEBI:60519"/>
    </ligand>
</feature>
<feature type="binding site" evidence="1">
    <location>
        <position position="433"/>
    </location>
    <ligand>
        <name>hybrid [4Fe-2O-2S] cluster</name>
        <dbReference type="ChEBI" id="CHEBI:60519"/>
    </ligand>
</feature>
<feature type="binding site" evidence="1">
    <location>
        <position position="458"/>
    </location>
    <ligand>
        <name>hybrid [4Fe-2O-2S] cluster</name>
        <dbReference type="ChEBI" id="CHEBI:60519"/>
    </ligand>
</feature>
<feature type="binding site" evidence="1">
    <location>
        <position position="493"/>
    </location>
    <ligand>
        <name>hybrid [4Fe-2O-2S] cluster</name>
        <dbReference type="ChEBI" id="CHEBI:60519"/>
    </ligand>
</feature>
<feature type="binding site" evidence="1">
    <location>
        <position position="495"/>
    </location>
    <ligand>
        <name>hybrid [4Fe-2O-2S] cluster</name>
        <dbReference type="ChEBI" id="CHEBI:60519"/>
    </ligand>
</feature>
<feature type="modified residue" description="Cysteine persulfide" evidence="1">
    <location>
        <position position="405"/>
    </location>
</feature>
<gene>
    <name evidence="1" type="primary">hcp</name>
    <name type="ordered locus">PG_0893</name>
</gene>
<comment type="function">
    <text evidence="1">Catalyzes the reduction of hydroxylamine to form NH(3) and H(2)O.</text>
</comment>
<comment type="catalytic activity">
    <reaction evidence="1">
        <text>A + NH4(+) + H2O = hydroxylamine + AH2 + H(+)</text>
        <dbReference type="Rhea" id="RHEA:22052"/>
        <dbReference type="ChEBI" id="CHEBI:13193"/>
        <dbReference type="ChEBI" id="CHEBI:15377"/>
        <dbReference type="ChEBI" id="CHEBI:15378"/>
        <dbReference type="ChEBI" id="CHEBI:15429"/>
        <dbReference type="ChEBI" id="CHEBI:17499"/>
        <dbReference type="ChEBI" id="CHEBI:28938"/>
        <dbReference type="EC" id="1.7.99.1"/>
    </reaction>
</comment>
<comment type="cofactor">
    <cofactor evidence="1">
        <name>[4Fe-4S] cluster</name>
        <dbReference type="ChEBI" id="CHEBI:49883"/>
    </cofactor>
    <text evidence="1">Binds 1 [4Fe-4S] cluster.</text>
</comment>
<comment type="cofactor">
    <cofactor evidence="1">
        <name>hybrid [4Fe-2O-2S] cluster</name>
        <dbReference type="ChEBI" id="CHEBI:60519"/>
    </cofactor>
    <text evidence="1">Binds 1 hybrid [4Fe-2O-2S] cluster.</text>
</comment>
<comment type="subcellular location">
    <subcellularLocation>
        <location evidence="1">Cytoplasm</location>
    </subcellularLocation>
</comment>
<comment type="similarity">
    <text evidence="1">Belongs to the HCP family.</text>
</comment>
<proteinExistence type="inferred from homology"/>
<dbReference type="EC" id="1.7.99.1" evidence="1"/>
<dbReference type="EMBL" id="AE015924">
    <property type="protein sequence ID" value="AAQ66036.1"/>
    <property type="molecule type" value="Genomic_DNA"/>
</dbReference>
<dbReference type="RefSeq" id="WP_005875197.1">
    <property type="nucleotide sequence ID" value="NC_002950.2"/>
</dbReference>
<dbReference type="SMR" id="Q7MVY0"/>
<dbReference type="STRING" id="242619.PG_0893"/>
<dbReference type="EnsemblBacteria" id="AAQ66036">
    <property type="protein sequence ID" value="AAQ66036"/>
    <property type="gene ID" value="PG_0893"/>
</dbReference>
<dbReference type="KEGG" id="pgi:PG_0893"/>
<dbReference type="PATRIC" id="fig|242619.8.peg.826"/>
<dbReference type="eggNOG" id="COG1151">
    <property type="taxonomic scope" value="Bacteria"/>
</dbReference>
<dbReference type="HOGENOM" id="CLU_038344_2_0_10"/>
<dbReference type="BioCyc" id="PGIN242619:G1G02-831-MONOMER"/>
<dbReference type="BRENDA" id="1.7.1.10">
    <property type="organism ID" value="756"/>
</dbReference>
<dbReference type="Proteomes" id="UP000000588">
    <property type="component" value="Chromosome"/>
</dbReference>
<dbReference type="GO" id="GO:0005737">
    <property type="term" value="C:cytoplasm"/>
    <property type="evidence" value="ECO:0007669"/>
    <property type="project" value="UniProtKB-SubCell"/>
</dbReference>
<dbReference type="GO" id="GO:0051539">
    <property type="term" value="F:4 iron, 4 sulfur cluster binding"/>
    <property type="evidence" value="ECO:0007669"/>
    <property type="project" value="UniProtKB-KW"/>
</dbReference>
<dbReference type="GO" id="GO:0050418">
    <property type="term" value="F:hydroxylamine reductase activity"/>
    <property type="evidence" value="ECO:0007669"/>
    <property type="project" value="UniProtKB-UniRule"/>
</dbReference>
<dbReference type="GO" id="GO:0046872">
    <property type="term" value="F:metal ion binding"/>
    <property type="evidence" value="ECO:0007669"/>
    <property type="project" value="UniProtKB-KW"/>
</dbReference>
<dbReference type="GO" id="GO:0004601">
    <property type="term" value="F:peroxidase activity"/>
    <property type="evidence" value="ECO:0007669"/>
    <property type="project" value="TreeGrafter"/>
</dbReference>
<dbReference type="GO" id="GO:0042542">
    <property type="term" value="P:response to hydrogen peroxide"/>
    <property type="evidence" value="ECO:0007669"/>
    <property type="project" value="TreeGrafter"/>
</dbReference>
<dbReference type="CDD" id="cd01914">
    <property type="entry name" value="HCP"/>
    <property type="match status" value="1"/>
</dbReference>
<dbReference type="FunFam" id="1.20.1270.20:FF:000001">
    <property type="entry name" value="Hydroxylamine reductase"/>
    <property type="match status" value="1"/>
</dbReference>
<dbReference type="FunFam" id="3.40.50.2030:FF:000001">
    <property type="entry name" value="Hydroxylamine reductase"/>
    <property type="match status" value="1"/>
</dbReference>
<dbReference type="FunFam" id="3.40.50.2030:FF:000002">
    <property type="entry name" value="Hydroxylamine reductase"/>
    <property type="match status" value="1"/>
</dbReference>
<dbReference type="Gene3D" id="1.20.1270.20">
    <property type="match status" value="2"/>
</dbReference>
<dbReference type="Gene3D" id="3.40.50.2030">
    <property type="match status" value="2"/>
</dbReference>
<dbReference type="HAMAP" id="MF_00069">
    <property type="entry name" value="Hydroxylam_reduct"/>
    <property type="match status" value="1"/>
</dbReference>
<dbReference type="InterPro" id="IPR004137">
    <property type="entry name" value="HCP/CODH"/>
</dbReference>
<dbReference type="InterPro" id="IPR010048">
    <property type="entry name" value="Hydroxylam_reduct"/>
</dbReference>
<dbReference type="InterPro" id="IPR016099">
    <property type="entry name" value="Prismane-like_a/b-sand"/>
</dbReference>
<dbReference type="InterPro" id="IPR011254">
    <property type="entry name" value="Prismane-like_sf"/>
</dbReference>
<dbReference type="InterPro" id="IPR016100">
    <property type="entry name" value="Prismane_a-bundle"/>
</dbReference>
<dbReference type="NCBIfam" id="TIGR01703">
    <property type="entry name" value="hybrid_clust"/>
    <property type="match status" value="1"/>
</dbReference>
<dbReference type="NCBIfam" id="NF003658">
    <property type="entry name" value="PRK05290.1"/>
    <property type="match status" value="1"/>
</dbReference>
<dbReference type="PANTHER" id="PTHR30109">
    <property type="entry name" value="HYDROXYLAMINE REDUCTASE"/>
    <property type="match status" value="1"/>
</dbReference>
<dbReference type="PANTHER" id="PTHR30109:SF0">
    <property type="entry name" value="HYDROXYLAMINE REDUCTASE"/>
    <property type="match status" value="1"/>
</dbReference>
<dbReference type="Pfam" id="PF03063">
    <property type="entry name" value="Prismane"/>
    <property type="match status" value="1"/>
</dbReference>
<dbReference type="PIRSF" id="PIRSF000076">
    <property type="entry name" value="HCP"/>
    <property type="match status" value="1"/>
</dbReference>
<dbReference type="SUPFAM" id="SSF56821">
    <property type="entry name" value="Prismane protein-like"/>
    <property type="match status" value="1"/>
</dbReference>
<protein>
    <recommendedName>
        <fullName evidence="1">Hydroxylamine reductase</fullName>
        <ecNumber evidence="1">1.7.99.1</ecNumber>
    </recommendedName>
    <alternativeName>
        <fullName evidence="1">Hybrid-cluster protein</fullName>
        <shortName evidence="1">HCP</shortName>
    </alternativeName>
    <alternativeName>
        <fullName evidence="1">Prismane protein</fullName>
    </alternativeName>
</protein>
<accession>Q7MVY0</accession>
<keyword id="KW-0004">4Fe-4S</keyword>
<keyword id="KW-0963">Cytoplasm</keyword>
<keyword id="KW-0408">Iron</keyword>
<keyword id="KW-0411">Iron-sulfur</keyword>
<keyword id="KW-0479">Metal-binding</keyword>
<keyword id="KW-0560">Oxidoreductase</keyword>
<keyword id="KW-1185">Reference proteome</keyword>
<evidence type="ECO:0000255" key="1">
    <source>
        <dbReference type="HAMAP-Rule" id="MF_00069"/>
    </source>
</evidence>